<comment type="function">
    <text evidence="1">Cleaves peptides in various proteins in a process that requires ATP hydrolysis. Has a chymotrypsin-like activity. Plays a major role in the degradation of misfolded proteins.</text>
</comment>
<comment type="catalytic activity">
    <reaction evidence="1">
        <text>Hydrolysis of proteins to small peptides in the presence of ATP and magnesium. alpha-casein is the usual test substrate. In the absence of ATP, only oligopeptides shorter than five residues are hydrolyzed (such as succinyl-Leu-Tyr-|-NHMec, and Leu-Tyr-Leu-|-Tyr-Trp, in which cleavage of the -Tyr-|-Leu- and -Tyr-|-Trp bonds also occurs).</text>
        <dbReference type="EC" id="3.4.21.92"/>
    </reaction>
</comment>
<comment type="subunit">
    <text evidence="1">Fourteen ClpP subunits assemble into 2 heptameric rings which stack back to back to give a disk-like structure with a central cavity, resembling the structure of eukaryotic proteasomes.</text>
</comment>
<comment type="subcellular location">
    <subcellularLocation>
        <location evidence="1">Cytoplasm</location>
    </subcellularLocation>
</comment>
<comment type="similarity">
    <text evidence="1">Belongs to the peptidase S14 family.</text>
</comment>
<accession>Q5FFG7</accession>
<feature type="chain" id="PRO_0000179555" description="ATP-dependent Clp protease proteolytic subunit">
    <location>
        <begin position="1"/>
        <end position="198"/>
    </location>
</feature>
<feature type="active site" description="Nucleophile" evidence="1">
    <location>
        <position position="98"/>
    </location>
</feature>
<feature type="active site" evidence="1">
    <location>
        <position position="123"/>
    </location>
</feature>
<evidence type="ECO:0000255" key="1">
    <source>
        <dbReference type="HAMAP-Rule" id="MF_00444"/>
    </source>
</evidence>
<proteinExistence type="inferred from homology"/>
<sequence length="198" mass="21925">MTLVPMVVEPTSRGERAYDIYTRLLKERIIFITGPIEDQMASLVVAQLIFLEAENPEKDISMYINSPGGVVTAGLSIYDTMQYVKPRIATLCLGQAASMGSLLLAAGEKGMRCALPNSRIMIHQPSGGFQGQATDIEIHAKEILNIKSRLNYIYVKHTGRELSEVVASMERDNFMSADSAQDFGIIDKVIEKRLDIEV</sequence>
<protein>
    <recommendedName>
        <fullName evidence="1">ATP-dependent Clp protease proteolytic subunit</fullName>
        <ecNumber evidence="1">3.4.21.92</ecNumber>
    </recommendedName>
    <alternativeName>
        <fullName evidence="1">Endopeptidase Clp</fullName>
    </alternativeName>
</protein>
<reference key="1">
    <citation type="journal article" date="2006" name="J. Bacteriol.">
        <title>Comparative genomic analysis of three strains of Ehrlichia ruminantium reveals an active process of genome size plasticity.</title>
        <authorList>
            <person name="Frutos R."/>
            <person name="Viari A."/>
            <person name="Ferraz C."/>
            <person name="Morgat A."/>
            <person name="Eychenie S."/>
            <person name="Kandassamy Y."/>
            <person name="Chantal I."/>
            <person name="Bensaid A."/>
            <person name="Coissac E."/>
            <person name="Vachiery N."/>
            <person name="Demaille J."/>
            <person name="Martinez D."/>
        </authorList>
    </citation>
    <scope>NUCLEOTIDE SEQUENCE [LARGE SCALE GENOMIC DNA]</scope>
    <source>
        <strain>Gardel</strain>
    </source>
</reference>
<keyword id="KW-0963">Cytoplasm</keyword>
<keyword id="KW-0378">Hydrolase</keyword>
<keyword id="KW-0645">Protease</keyword>
<keyword id="KW-0720">Serine protease</keyword>
<name>CLPP_EHRRG</name>
<gene>
    <name evidence="1" type="primary">clpP</name>
    <name type="ordered locus">ERGA_CDS_01970</name>
</gene>
<organism>
    <name type="scientific">Ehrlichia ruminantium (strain Gardel)</name>
    <dbReference type="NCBI Taxonomy" id="302409"/>
    <lineage>
        <taxon>Bacteria</taxon>
        <taxon>Pseudomonadati</taxon>
        <taxon>Pseudomonadota</taxon>
        <taxon>Alphaproteobacteria</taxon>
        <taxon>Rickettsiales</taxon>
        <taxon>Anaplasmataceae</taxon>
        <taxon>Ehrlichia</taxon>
    </lineage>
</organism>
<dbReference type="EC" id="3.4.21.92" evidence="1"/>
<dbReference type="EMBL" id="CR925677">
    <property type="protein sequence ID" value="CAI27649.1"/>
    <property type="molecule type" value="Genomic_DNA"/>
</dbReference>
<dbReference type="RefSeq" id="WP_011255371.1">
    <property type="nucleotide sequence ID" value="NC_006831.1"/>
</dbReference>
<dbReference type="SMR" id="Q5FFG7"/>
<dbReference type="MEROPS" id="S14.001"/>
<dbReference type="KEGG" id="erg:ERGA_CDS_01970"/>
<dbReference type="HOGENOM" id="CLU_058707_3_3_5"/>
<dbReference type="OrthoDB" id="9802800at2"/>
<dbReference type="Proteomes" id="UP000000533">
    <property type="component" value="Chromosome"/>
</dbReference>
<dbReference type="GO" id="GO:0005737">
    <property type="term" value="C:cytoplasm"/>
    <property type="evidence" value="ECO:0007669"/>
    <property type="project" value="UniProtKB-SubCell"/>
</dbReference>
<dbReference type="GO" id="GO:0009368">
    <property type="term" value="C:endopeptidase Clp complex"/>
    <property type="evidence" value="ECO:0007669"/>
    <property type="project" value="TreeGrafter"/>
</dbReference>
<dbReference type="GO" id="GO:0004176">
    <property type="term" value="F:ATP-dependent peptidase activity"/>
    <property type="evidence" value="ECO:0007669"/>
    <property type="project" value="InterPro"/>
</dbReference>
<dbReference type="GO" id="GO:0051117">
    <property type="term" value="F:ATPase binding"/>
    <property type="evidence" value="ECO:0007669"/>
    <property type="project" value="TreeGrafter"/>
</dbReference>
<dbReference type="GO" id="GO:0004252">
    <property type="term" value="F:serine-type endopeptidase activity"/>
    <property type="evidence" value="ECO:0007669"/>
    <property type="project" value="UniProtKB-UniRule"/>
</dbReference>
<dbReference type="GO" id="GO:0006515">
    <property type="term" value="P:protein quality control for misfolded or incompletely synthesized proteins"/>
    <property type="evidence" value="ECO:0007669"/>
    <property type="project" value="TreeGrafter"/>
</dbReference>
<dbReference type="CDD" id="cd07017">
    <property type="entry name" value="S14_ClpP_2"/>
    <property type="match status" value="1"/>
</dbReference>
<dbReference type="FunFam" id="3.90.226.10:FF:000001">
    <property type="entry name" value="ATP-dependent Clp protease proteolytic subunit"/>
    <property type="match status" value="1"/>
</dbReference>
<dbReference type="Gene3D" id="3.90.226.10">
    <property type="entry name" value="2-enoyl-CoA Hydratase, Chain A, domain 1"/>
    <property type="match status" value="1"/>
</dbReference>
<dbReference type="HAMAP" id="MF_00444">
    <property type="entry name" value="ClpP"/>
    <property type="match status" value="1"/>
</dbReference>
<dbReference type="InterPro" id="IPR001907">
    <property type="entry name" value="ClpP"/>
</dbReference>
<dbReference type="InterPro" id="IPR029045">
    <property type="entry name" value="ClpP/crotonase-like_dom_sf"/>
</dbReference>
<dbReference type="InterPro" id="IPR023562">
    <property type="entry name" value="ClpP/TepA"/>
</dbReference>
<dbReference type="InterPro" id="IPR033135">
    <property type="entry name" value="ClpP_His_AS"/>
</dbReference>
<dbReference type="InterPro" id="IPR018215">
    <property type="entry name" value="ClpP_Ser_AS"/>
</dbReference>
<dbReference type="NCBIfam" id="TIGR00493">
    <property type="entry name" value="clpP"/>
    <property type="match status" value="1"/>
</dbReference>
<dbReference type="NCBIfam" id="NF001368">
    <property type="entry name" value="PRK00277.1"/>
    <property type="match status" value="1"/>
</dbReference>
<dbReference type="NCBIfam" id="NF009205">
    <property type="entry name" value="PRK12553.1"/>
    <property type="match status" value="1"/>
</dbReference>
<dbReference type="PANTHER" id="PTHR10381">
    <property type="entry name" value="ATP-DEPENDENT CLP PROTEASE PROTEOLYTIC SUBUNIT"/>
    <property type="match status" value="1"/>
</dbReference>
<dbReference type="PANTHER" id="PTHR10381:SF70">
    <property type="entry name" value="ATP-DEPENDENT CLP PROTEASE PROTEOLYTIC SUBUNIT"/>
    <property type="match status" value="1"/>
</dbReference>
<dbReference type="Pfam" id="PF00574">
    <property type="entry name" value="CLP_protease"/>
    <property type="match status" value="1"/>
</dbReference>
<dbReference type="PRINTS" id="PR00127">
    <property type="entry name" value="CLPPROTEASEP"/>
</dbReference>
<dbReference type="SUPFAM" id="SSF52096">
    <property type="entry name" value="ClpP/crotonase"/>
    <property type="match status" value="1"/>
</dbReference>
<dbReference type="PROSITE" id="PS00382">
    <property type="entry name" value="CLP_PROTEASE_HIS"/>
    <property type="match status" value="1"/>
</dbReference>
<dbReference type="PROSITE" id="PS00381">
    <property type="entry name" value="CLP_PROTEASE_SER"/>
    <property type="match status" value="1"/>
</dbReference>